<organism>
    <name type="scientific">Arabidopsis thaliana</name>
    <name type="common">Mouse-ear cress</name>
    <dbReference type="NCBI Taxonomy" id="3702"/>
    <lineage>
        <taxon>Eukaryota</taxon>
        <taxon>Viridiplantae</taxon>
        <taxon>Streptophyta</taxon>
        <taxon>Embryophyta</taxon>
        <taxon>Tracheophyta</taxon>
        <taxon>Spermatophyta</taxon>
        <taxon>Magnoliopsida</taxon>
        <taxon>eudicotyledons</taxon>
        <taxon>Gunneridae</taxon>
        <taxon>Pentapetalae</taxon>
        <taxon>rosids</taxon>
        <taxon>malvids</taxon>
        <taxon>Brassicales</taxon>
        <taxon>Brassicaceae</taxon>
        <taxon>Camelineae</taxon>
        <taxon>Arabidopsis</taxon>
    </lineage>
</organism>
<evidence type="ECO:0000255" key="1"/>
<evidence type="ECO:0000255" key="2">
    <source>
        <dbReference type="PROSITE-ProRule" id="PRU00044"/>
    </source>
</evidence>
<evidence type="ECO:0000255" key="3">
    <source>
        <dbReference type="PROSITE-ProRule" id="PRU00283"/>
    </source>
</evidence>
<evidence type="ECO:0000256" key="4">
    <source>
        <dbReference type="SAM" id="MobiDB-lite"/>
    </source>
</evidence>
<evidence type="ECO:0000303" key="5">
    <source>
    </source>
</evidence>
<evidence type="ECO:0000305" key="6"/>
<evidence type="ECO:0000312" key="7">
    <source>
        <dbReference type="Araport" id="AT1G09170"/>
    </source>
</evidence>
<evidence type="ECO:0000312" key="8">
    <source>
        <dbReference type="EMBL" id="AAC24096.1"/>
    </source>
</evidence>
<sequence length="1040" mass="114914">MATEQQDSQLCLATILEDFLKQRNIQVSVGVDSSSLKKADETFGGRDLPVDPSDLRRYEAARWVRNTLGVVGGRDLPADPSEEDFRIALRSGILLCNVLNRVKPGAVPKVVEAPNDPLVNQDGAALSAFQYFENLRNFLVFVEEMGIPTFEVSDFEKGGKSARIVECVLALKSYREWKQSGGSGTWRYILNSKPTTFGIAKQYKRKDSEVPVDAVTNSPSSTPSSEQPLLDQSDSNTKNDGTASSIDAIVRAVFSDMKQEDIPVIVEDMLKSVMVEYERRLATQNELLLMSAGNRDKLGSGDLGRTISGNEETLSDASYGEENVTEIVNNNMEASQDSNVEELENQDYELYAISKEKTEKQQLIIERQQTHTEELKHDLKAVKAGLSLLQMKYQQEFTSLGKHLHGLTYAATGYQRVLEENRKLYNQVQDLKGSIRVYCRVRPFLPGQKSVLTTVDHLEDSTLSIATPSKYGKEGQKTFTFNKVFGPSASQEAVFADTQPLIRSVLDGYNVCIFAYGQTGSGKTFTMMGPNELTDETLGVNYRALSDLFHLSSVRKETFSYNISVQMLEIYNEQVRDLLATNEIRNSTQDGINVPEATLVPVSTTSDVIHLMNIGQKNRAVSATAMNDRSSRSHSCLTVHVQGKDLTSGVTLRGSMHLVDLAGSERIDKSEVTGDRLKEAQHINKSLSALGDVIASLSQKNNHIPYRNSKLTQLLQDALGGQAKTLMFIHISPELEDLGETLSTLKFAERVATVDLGAARVNKDTSEVKELKEQIASLKLALARKESGADQTQLQRPLTPDKLLRKKSLGVSSSFSKSANSTRQVQTKHKPSQIDDVNSIEGQSDSASSLDLQGLVGSPSWKTPPRDGKEEDMEFIIPGSEWVDKHEDEITRSSKPENRAHTQLEKRTSSLKREATRGVDKNKCNSSVDKGLEVRKIPYEEEANESDETATSDCSETNLMWQLNVQVNMPRPASNGSSTKLKKNQSKISRVAAETRSMIPSLIPTPTRTLSLGAAISSPGQTSSRHNNSTVVVKKRQNPK</sequence>
<comment type="similarity">
    <text evidence="5">Belongs to the TRAFAC class myosin-kinesin ATPase superfamily. Kinesin family. KIN-14 subfamily.</text>
</comment>
<comment type="sequence caution" evidence="6">
    <conflict type="erroneous gene model prediction">
        <sequence resource="EMBL-CDS" id="AAC24096"/>
    </conflict>
</comment>
<comment type="sequence caution" evidence="6">
    <conflict type="erroneous gene model prediction">
        <sequence resource="EMBL-CDS" id="AEE28407"/>
    </conflict>
</comment>
<keyword id="KW-0067">ATP-binding</keyword>
<keyword id="KW-0175">Coiled coil</keyword>
<keyword id="KW-0493">Microtubule</keyword>
<keyword id="KW-0505">Motor protein</keyword>
<keyword id="KW-0547">Nucleotide-binding</keyword>
<keyword id="KW-1185">Reference proteome</keyword>
<reference key="1">
    <citation type="journal article" date="2000" name="Nature">
        <title>Sequence and analysis of chromosome 1 of the plant Arabidopsis thaliana.</title>
        <authorList>
            <person name="Theologis A."/>
            <person name="Ecker J.R."/>
            <person name="Palm C.J."/>
            <person name="Federspiel N.A."/>
            <person name="Kaul S."/>
            <person name="White O."/>
            <person name="Alonso J."/>
            <person name="Altafi H."/>
            <person name="Araujo R."/>
            <person name="Bowman C.L."/>
            <person name="Brooks S.Y."/>
            <person name="Buehler E."/>
            <person name="Chan A."/>
            <person name="Chao Q."/>
            <person name="Chen H."/>
            <person name="Cheuk R.F."/>
            <person name="Chin C.W."/>
            <person name="Chung M.K."/>
            <person name="Conn L."/>
            <person name="Conway A.B."/>
            <person name="Conway A.R."/>
            <person name="Creasy T.H."/>
            <person name="Dewar K."/>
            <person name="Dunn P."/>
            <person name="Etgu P."/>
            <person name="Feldblyum T.V."/>
            <person name="Feng J.-D."/>
            <person name="Fong B."/>
            <person name="Fujii C.Y."/>
            <person name="Gill J.E."/>
            <person name="Goldsmith A.D."/>
            <person name="Haas B."/>
            <person name="Hansen N.F."/>
            <person name="Hughes B."/>
            <person name="Huizar L."/>
            <person name="Hunter J.L."/>
            <person name="Jenkins J."/>
            <person name="Johnson-Hopson C."/>
            <person name="Khan S."/>
            <person name="Khaykin E."/>
            <person name="Kim C.J."/>
            <person name="Koo H.L."/>
            <person name="Kremenetskaia I."/>
            <person name="Kurtz D.B."/>
            <person name="Kwan A."/>
            <person name="Lam B."/>
            <person name="Langin-Hooper S."/>
            <person name="Lee A."/>
            <person name="Lee J.M."/>
            <person name="Lenz C.A."/>
            <person name="Li J.H."/>
            <person name="Li Y.-P."/>
            <person name="Lin X."/>
            <person name="Liu S.X."/>
            <person name="Liu Z.A."/>
            <person name="Luros J.S."/>
            <person name="Maiti R."/>
            <person name="Marziali A."/>
            <person name="Militscher J."/>
            <person name="Miranda M."/>
            <person name="Nguyen M."/>
            <person name="Nierman W.C."/>
            <person name="Osborne B.I."/>
            <person name="Pai G."/>
            <person name="Peterson J."/>
            <person name="Pham P.K."/>
            <person name="Rizzo M."/>
            <person name="Rooney T."/>
            <person name="Rowley D."/>
            <person name="Sakano H."/>
            <person name="Salzberg S.L."/>
            <person name="Schwartz J.R."/>
            <person name="Shinn P."/>
            <person name="Southwick A.M."/>
            <person name="Sun H."/>
            <person name="Tallon L.J."/>
            <person name="Tambunga G."/>
            <person name="Toriumi M.J."/>
            <person name="Town C.D."/>
            <person name="Utterback T."/>
            <person name="Van Aken S."/>
            <person name="Vaysberg M."/>
            <person name="Vysotskaia V.S."/>
            <person name="Walker M."/>
            <person name="Wu D."/>
            <person name="Yu G."/>
            <person name="Fraser C.M."/>
            <person name="Venter J.C."/>
            <person name="Davis R.W."/>
        </authorList>
    </citation>
    <scope>NUCLEOTIDE SEQUENCE [LARGE SCALE GENOMIC DNA]</scope>
    <source>
        <strain>cv. Columbia</strain>
    </source>
</reference>
<reference key="2">
    <citation type="journal article" date="2017" name="Plant J.">
        <title>Araport11: a complete reannotation of the Arabidopsis thaliana reference genome.</title>
        <authorList>
            <person name="Cheng C.Y."/>
            <person name="Krishnakumar V."/>
            <person name="Chan A.P."/>
            <person name="Thibaud-Nissen F."/>
            <person name="Schobel S."/>
            <person name="Town C.D."/>
        </authorList>
    </citation>
    <scope>GENOME REANNOTATION</scope>
    <source>
        <strain>cv. Columbia</strain>
    </source>
</reference>
<reference key="3">
    <citation type="journal article" date="2001" name="BMC Genomics">
        <title>Kinesins in the Arabidopsis genome: a comparative analysis among eukaryotes.</title>
        <authorList>
            <person name="Reddy A.S."/>
            <person name="Day I.S."/>
        </authorList>
    </citation>
    <scope>GENE FAMILY</scope>
</reference>
<reference key="4">
    <citation type="journal article" date="2006" name="BMC Genomics">
        <title>Comprehensive comparative analysis of kinesins in photosynthetic eukaryotes.</title>
        <authorList>
            <person name="Richardson D.N."/>
            <person name="Simmons M.P."/>
            <person name="Reddy A.S."/>
        </authorList>
    </citation>
    <scope>GENE FAMILY</scope>
    <scope>NOMENCLATURE</scope>
</reference>
<reference key="5">
    <citation type="journal article" date="2012" name="Protoplasma">
        <title>Functions of the Arabidopsis kinesin superfamily of microtubule-based motor proteins.</title>
        <authorList>
            <person name="Zhu C."/>
            <person name="Dixit R."/>
        </authorList>
    </citation>
    <scope>REVIEW</scope>
</reference>
<feature type="chain" id="PRO_0000438043" description="Kinesin-like protein KIN-14H">
    <location>
        <begin position="1"/>
        <end position="1040"/>
    </location>
</feature>
<feature type="domain" description="Calponin-homology (CH)" evidence="2">
    <location>
        <begin position="54"/>
        <end position="176"/>
    </location>
</feature>
<feature type="domain" description="Kinesin motor" evidence="3">
    <location>
        <begin position="434"/>
        <end position="754"/>
    </location>
</feature>
<feature type="region of interest" description="Disordered" evidence="4">
    <location>
        <begin position="208"/>
        <end position="242"/>
    </location>
</feature>
<feature type="region of interest" description="Disordered" evidence="4">
    <location>
        <begin position="809"/>
        <end position="871"/>
    </location>
</feature>
<feature type="region of interest" description="Disordered" evidence="4">
    <location>
        <begin position="887"/>
        <end position="926"/>
    </location>
</feature>
<feature type="region of interest" description="Disordered" evidence="4">
    <location>
        <begin position="969"/>
        <end position="1040"/>
    </location>
</feature>
<feature type="coiled-coil region" evidence="1">
    <location>
        <begin position="761"/>
        <end position="796"/>
    </location>
</feature>
<feature type="compositionally biased region" description="Polar residues" evidence="4">
    <location>
        <begin position="215"/>
        <end position="242"/>
    </location>
</feature>
<feature type="compositionally biased region" description="Low complexity" evidence="4">
    <location>
        <begin position="809"/>
        <end position="818"/>
    </location>
</feature>
<feature type="compositionally biased region" description="Polar residues" evidence="4">
    <location>
        <begin position="840"/>
        <end position="851"/>
    </location>
</feature>
<feature type="compositionally biased region" description="Basic and acidic residues" evidence="4">
    <location>
        <begin position="887"/>
        <end position="923"/>
    </location>
</feature>
<feature type="compositionally biased region" description="Polar residues" evidence="4">
    <location>
        <begin position="1018"/>
        <end position="1031"/>
    </location>
</feature>
<feature type="binding site" evidence="3">
    <location>
        <begin position="517"/>
        <end position="524"/>
    </location>
    <ligand>
        <name>ATP</name>
        <dbReference type="ChEBI" id="CHEBI:30616"/>
    </ligand>
</feature>
<gene>
    <name evidence="6" type="primary">KIN14H</name>
    <name evidence="7" type="ordered locus">At1g09170</name>
    <name evidence="8" type="ORF">T12M4.14</name>
</gene>
<dbReference type="EMBL" id="AC003114">
    <property type="protein sequence ID" value="AAC24096.1"/>
    <property type="status" value="ALT_SEQ"/>
    <property type="molecule type" value="Genomic_DNA"/>
</dbReference>
<dbReference type="EMBL" id="CP002684">
    <property type="protein sequence ID" value="AEE28407.1"/>
    <property type="status" value="ALT_SEQ"/>
    <property type="molecule type" value="Genomic_DNA"/>
</dbReference>
<dbReference type="PIR" id="B86224">
    <property type="entry name" value="B86224"/>
</dbReference>
<dbReference type="RefSeq" id="NP_172389.2">
    <property type="nucleotide sequence ID" value="NM_100787.3"/>
</dbReference>
<dbReference type="SMR" id="F4HZF0"/>
<dbReference type="FunCoup" id="F4HZF0">
    <property type="interactions" value="6"/>
</dbReference>
<dbReference type="STRING" id="3702.F4HZF0"/>
<dbReference type="GlyGen" id="F4HZF0">
    <property type="glycosylation" value="1 site"/>
</dbReference>
<dbReference type="PaxDb" id="3702-AT1G09170.1"/>
<dbReference type="PeptideAtlas" id="F4HZF0"/>
<dbReference type="GeneID" id="837437"/>
<dbReference type="KEGG" id="ath:AT1G09170"/>
<dbReference type="Araport" id="AT1G09170"/>
<dbReference type="TAIR" id="AT1G09170"/>
<dbReference type="eggNOG" id="KOG0239">
    <property type="taxonomic scope" value="Eukaryota"/>
</dbReference>
<dbReference type="HOGENOM" id="CLU_001485_8_0_1"/>
<dbReference type="InParanoid" id="F4HZF0"/>
<dbReference type="PRO" id="PR:F4HZF0"/>
<dbReference type="Proteomes" id="UP000006548">
    <property type="component" value="Chromosome 1"/>
</dbReference>
<dbReference type="ExpressionAtlas" id="F4HZF0">
    <property type="expression patterns" value="baseline and differential"/>
</dbReference>
<dbReference type="GO" id="GO:0005874">
    <property type="term" value="C:microtubule"/>
    <property type="evidence" value="ECO:0007669"/>
    <property type="project" value="UniProtKB-KW"/>
</dbReference>
<dbReference type="GO" id="GO:0015630">
    <property type="term" value="C:microtubule cytoskeleton"/>
    <property type="evidence" value="ECO:0000318"/>
    <property type="project" value="GO_Central"/>
</dbReference>
<dbReference type="GO" id="GO:0005524">
    <property type="term" value="F:ATP binding"/>
    <property type="evidence" value="ECO:0007669"/>
    <property type="project" value="UniProtKB-KW"/>
</dbReference>
<dbReference type="GO" id="GO:0008017">
    <property type="term" value="F:microtubule binding"/>
    <property type="evidence" value="ECO:0000318"/>
    <property type="project" value="GO_Central"/>
</dbReference>
<dbReference type="GO" id="GO:0003777">
    <property type="term" value="F:microtubule motor activity"/>
    <property type="evidence" value="ECO:0007669"/>
    <property type="project" value="InterPro"/>
</dbReference>
<dbReference type="GO" id="GO:0007018">
    <property type="term" value="P:microtubule-based movement"/>
    <property type="evidence" value="ECO:0007669"/>
    <property type="project" value="InterPro"/>
</dbReference>
<dbReference type="GO" id="GO:0007017">
    <property type="term" value="P:microtubule-based process"/>
    <property type="evidence" value="ECO:0000318"/>
    <property type="project" value="GO_Central"/>
</dbReference>
<dbReference type="CDD" id="cd21203">
    <property type="entry name" value="CH_AtKIN14-like"/>
    <property type="match status" value="1"/>
</dbReference>
<dbReference type="CDD" id="cd01366">
    <property type="entry name" value="KISc_C_terminal"/>
    <property type="match status" value="1"/>
</dbReference>
<dbReference type="FunFam" id="3.40.850.10:FF:000045">
    <property type="entry name" value="Kinesin-like protein KIN-14I isoform A"/>
    <property type="match status" value="1"/>
</dbReference>
<dbReference type="Gene3D" id="1.10.418.10">
    <property type="entry name" value="Calponin-like domain"/>
    <property type="match status" value="1"/>
</dbReference>
<dbReference type="Gene3D" id="3.40.850.10">
    <property type="entry name" value="Kinesin motor domain"/>
    <property type="match status" value="1"/>
</dbReference>
<dbReference type="InterPro" id="IPR001715">
    <property type="entry name" value="CH_dom"/>
</dbReference>
<dbReference type="InterPro" id="IPR036872">
    <property type="entry name" value="CH_dom_sf"/>
</dbReference>
<dbReference type="InterPro" id="IPR027640">
    <property type="entry name" value="Kinesin-like_fam"/>
</dbReference>
<dbReference type="InterPro" id="IPR019821">
    <property type="entry name" value="Kinesin_motor_CS"/>
</dbReference>
<dbReference type="InterPro" id="IPR001752">
    <property type="entry name" value="Kinesin_motor_dom"/>
</dbReference>
<dbReference type="InterPro" id="IPR036961">
    <property type="entry name" value="Kinesin_motor_dom_sf"/>
</dbReference>
<dbReference type="InterPro" id="IPR027417">
    <property type="entry name" value="P-loop_NTPase"/>
</dbReference>
<dbReference type="PANTHER" id="PTHR47972:SF12">
    <property type="entry name" value="KINESIN-LIKE PROTEIN KIN-14H"/>
    <property type="match status" value="1"/>
</dbReference>
<dbReference type="PANTHER" id="PTHR47972">
    <property type="entry name" value="KINESIN-LIKE PROTEIN KLP-3"/>
    <property type="match status" value="1"/>
</dbReference>
<dbReference type="Pfam" id="PF00307">
    <property type="entry name" value="CH"/>
    <property type="match status" value="1"/>
</dbReference>
<dbReference type="Pfam" id="PF00225">
    <property type="entry name" value="Kinesin"/>
    <property type="match status" value="1"/>
</dbReference>
<dbReference type="PRINTS" id="PR00380">
    <property type="entry name" value="KINESINHEAVY"/>
</dbReference>
<dbReference type="SMART" id="SM00033">
    <property type="entry name" value="CH"/>
    <property type="match status" value="1"/>
</dbReference>
<dbReference type="SMART" id="SM00129">
    <property type="entry name" value="KISc"/>
    <property type="match status" value="1"/>
</dbReference>
<dbReference type="SUPFAM" id="SSF47576">
    <property type="entry name" value="Calponin-homology domain, CH-domain"/>
    <property type="match status" value="1"/>
</dbReference>
<dbReference type="SUPFAM" id="SSF52540">
    <property type="entry name" value="P-loop containing nucleoside triphosphate hydrolases"/>
    <property type="match status" value="1"/>
</dbReference>
<dbReference type="PROSITE" id="PS50021">
    <property type="entry name" value="CH"/>
    <property type="match status" value="1"/>
</dbReference>
<dbReference type="PROSITE" id="PS00411">
    <property type="entry name" value="KINESIN_MOTOR_1"/>
    <property type="match status" value="1"/>
</dbReference>
<dbReference type="PROSITE" id="PS50067">
    <property type="entry name" value="KINESIN_MOTOR_2"/>
    <property type="match status" value="1"/>
</dbReference>
<accession>F4HZF0</accession>
<accession>O80491</accession>
<name>KN14H_ARATH</name>
<proteinExistence type="inferred from homology"/>
<protein>
    <recommendedName>
        <fullName evidence="6">Kinesin-like protein KIN-14H</fullName>
    </recommendedName>
</protein>